<organism>
    <name type="scientific">Bos taurus</name>
    <name type="common">Bovine</name>
    <dbReference type="NCBI Taxonomy" id="9913"/>
    <lineage>
        <taxon>Eukaryota</taxon>
        <taxon>Metazoa</taxon>
        <taxon>Chordata</taxon>
        <taxon>Craniata</taxon>
        <taxon>Vertebrata</taxon>
        <taxon>Euteleostomi</taxon>
        <taxon>Mammalia</taxon>
        <taxon>Eutheria</taxon>
        <taxon>Laurasiatheria</taxon>
        <taxon>Artiodactyla</taxon>
        <taxon>Ruminantia</taxon>
        <taxon>Pecora</taxon>
        <taxon>Bovidae</taxon>
        <taxon>Bovinae</taxon>
        <taxon>Bos</taxon>
    </lineage>
</organism>
<dbReference type="EMBL" id="X53061">
    <property type="protein sequence ID" value="CAA37231.1"/>
    <property type="molecule type" value="mRNA"/>
</dbReference>
<dbReference type="EMBL" id="BC113237">
    <property type="protein sequence ID" value="AAI13238.1"/>
    <property type="molecule type" value="mRNA"/>
</dbReference>
<dbReference type="PIR" id="S11270">
    <property type="entry name" value="S11270"/>
</dbReference>
<dbReference type="RefSeq" id="NP_776324.1">
    <property type="nucleotide sequence ID" value="NM_173899.2"/>
</dbReference>
<dbReference type="SMR" id="P19238"/>
<dbReference type="FunCoup" id="P19238">
    <property type="interactions" value="335"/>
</dbReference>
<dbReference type="STRING" id="9913.ENSBTAP00000018258"/>
<dbReference type="GlyCosmos" id="P19238">
    <property type="glycosylation" value="4 sites, No reported glycans"/>
</dbReference>
<dbReference type="GlyGen" id="P19238">
    <property type="glycosylation" value="4 sites"/>
</dbReference>
<dbReference type="PaxDb" id="9913-ENSBTAP00000018258"/>
<dbReference type="Ensembl" id="ENSBTAT00000130291.1">
    <property type="protein sequence ID" value="ENSBTAP00000098499.1"/>
    <property type="gene ID" value="ENSBTAG00000013730.6"/>
</dbReference>
<dbReference type="GeneID" id="280745"/>
<dbReference type="KEGG" id="bta:280745"/>
<dbReference type="CTD" id="921"/>
<dbReference type="VEuPathDB" id="HostDB:ENSBTAG00000013730"/>
<dbReference type="VGNC" id="VGNC:27037">
    <property type="gene designation" value="CD5"/>
</dbReference>
<dbReference type="eggNOG" id="ENOG502RYTM">
    <property type="taxonomic scope" value="Eukaryota"/>
</dbReference>
<dbReference type="GeneTree" id="ENSGT00390000017536"/>
<dbReference type="HOGENOM" id="CLU_047656_0_0_1"/>
<dbReference type="InParanoid" id="P19238"/>
<dbReference type="OMA" id="VCSGFQP"/>
<dbReference type="OrthoDB" id="544868at2759"/>
<dbReference type="Proteomes" id="UP000009136">
    <property type="component" value="Chromosome 29"/>
</dbReference>
<dbReference type="Bgee" id="ENSBTAG00000013730">
    <property type="expression patterns" value="Expressed in mesenteric lymph node and 83 other cell types or tissues"/>
</dbReference>
<dbReference type="GO" id="GO:0009897">
    <property type="term" value="C:external side of plasma membrane"/>
    <property type="evidence" value="ECO:0007669"/>
    <property type="project" value="Ensembl"/>
</dbReference>
<dbReference type="GO" id="GO:0005886">
    <property type="term" value="C:plasma membrane"/>
    <property type="evidence" value="ECO:0000318"/>
    <property type="project" value="GO_Central"/>
</dbReference>
<dbReference type="GO" id="GO:0097190">
    <property type="term" value="P:apoptotic signaling pathway"/>
    <property type="evidence" value="ECO:0007669"/>
    <property type="project" value="Ensembl"/>
</dbReference>
<dbReference type="GO" id="GO:0031295">
    <property type="term" value="P:T cell costimulation"/>
    <property type="evidence" value="ECO:0000318"/>
    <property type="project" value="GO_Central"/>
</dbReference>
<dbReference type="FunFam" id="3.10.250.10:FF:000028">
    <property type="entry name" value="T-cell surface glycoprotein CD5"/>
    <property type="match status" value="1"/>
</dbReference>
<dbReference type="FunFam" id="3.10.250.10:FF:000030">
    <property type="entry name" value="T-cell surface glycoprotein CD5"/>
    <property type="match status" value="1"/>
</dbReference>
<dbReference type="Gene3D" id="3.10.250.10">
    <property type="entry name" value="SRCR-like domain"/>
    <property type="match status" value="2"/>
</dbReference>
<dbReference type="InterPro" id="IPR001190">
    <property type="entry name" value="SRCR"/>
</dbReference>
<dbReference type="InterPro" id="IPR036772">
    <property type="entry name" value="SRCR-like_dom_sf"/>
</dbReference>
<dbReference type="InterPro" id="IPR003566">
    <property type="entry name" value="Tcell_CD5"/>
</dbReference>
<dbReference type="PANTHER" id="PTHR47309">
    <property type="entry name" value="T-CELL SURFACE GLYCOPROTEIN CD5"/>
    <property type="match status" value="1"/>
</dbReference>
<dbReference type="PANTHER" id="PTHR47309:SF1">
    <property type="entry name" value="T-CELL SURFACE GLYCOPROTEIN CD5"/>
    <property type="match status" value="1"/>
</dbReference>
<dbReference type="Pfam" id="PF00530">
    <property type="entry name" value="SRCR"/>
    <property type="match status" value="2"/>
</dbReference>
<dbReference type="PRINTS" id="PR00258">
    <property type="entry name" value="SPERACTRCPTR"/>
</dbReference>
<dbReference type="PRINTS" id="PR01409">
    <property type="entry name" value="TCELLCD5"/>
</dbReference>
<dbReference type="SMART" id="SM00202">
    <property type="entry name" value="SR"/>
    <property type="match status" value="2"/>
</dbReference>
<dbReference type="SUPFAM" id="SSF56487">
    <property type="entry name" value="SRCR-like"/>
    <property type="match status" value="2"/>
</dbReference>
<dbReference type="PROSITE" id="PS50287">
    <property type="entry name" value="SRCR_2"/>
    <property type="match status" value="3"/>
</dbReference>
<sequence length="495" mass="54367">MGSQHLPLAALYLLELLVTSCLGGLKVEVQGLTMRLSGSGSRCQGRLEVSNGTEWYAVHSQSWGQLSLYQVAPRQFLKLCQELQCRDPLLLSSSRYFKEVQFQKLIICHGQLGSFSNCSLNRGRQVDSLALICLEPPRTTAPPTTSPPTTTPEPTAPPRFQLVAEPGGLRCAGVVEFYSGGLGGTIGIEPQNDIKDLGQLICAALQCGSFLKPLPETEEAQTQKPEGQRPLPIRWEIQNPKCTSLEQCFRKVQPWVGGQALGLICSDFQPKVQSRLVGGSDVCEGSVEVRSGKGQKWDTLCDDSWAKGTARWEEVCREQQCGNVSSYRGLDPSEKTLGGFYCPPGILSRCHKLEEKKSHCKRVFVTCQNSSRAGLGAGAVMSIILALLLLAVLLVVCGPLAYKKVVKKFRQKKQRQWIGPTGMNQNMSFHRNHTVTVRSQVENATASHVENEYSQPPRNSQISAYPALEGALHRISTQPDNSSDSDYELHGAQRL</sequence>
<accession>P19238</accession>
<accession>Q2HJA1</accession>
<gene>
    <name type="primary">CD5</name>
</gene>
<comment type="function">
    <text>May act as a receptor in regulating T-cell proliferation.</text>
</comment>
<comment type="subunit">
    <text evidence="1">Interacts with CD72/LYB-2. Interacts with PTPN6/SHP-1 (By similarity).</text>
</comment>
<comment type="subcellular location">
    <subcellularLocation>
        <location>Cell membrane</location>
        <topology>Single-pass type I membrane protein</topology>
    </subcellularLocation>
</comment>
<comment type="PTM">
    <text evidence="1">Phosphorylated on tyrosine residues by LYN; this creates binding sites for PTPN6/SHP-1.</text>
</comment>
<name>CD5_BOVIN</name>
<protein>
    <recommendedName>
        <fullName>T-cell surface glycoprotein CD5</fullName>
    </recommendedName>
    <cdAntigenName>CD5</cdAntigenName>
</protein>
<feature type="signal peptide" evidence="3">
    <location>
        <begin position="1"/>
        <end position="23"/>
    </location>
</feature>
<feature type="chain" id="PRO_0000033221" description="T-cell surface glycoprotein CD5">
    <location>
        <begin position="24"/>
        <end position="495"/>
    </location>
</feature>
<feature type="topological domain" description="Extracellular" evidence="3">
    <location>
        <begin position="24"/>
        <end position="372"/>
    </location>
</feature>
<feature type="transmembrane region" description="Helical" evidence="3">
    <location>
        <begin position="373"/>
        <end position="402"/>
    </location>
</feature>
<feature type="topological domain" description="Cytoplasmic" evidence="3">
    <location>
        <begin position="403"/>
        <end position="495"/>
    </location>
</feature>
<feature type="domain" description="SRCR 1" evidence="4">
    <location>
        <begin position="34"/>
        <end position="134"/>
    </location>
</feature>
<feature type="domain" description="SRCR 2" evidence="4">
    <location>
        <begin position="160"/>
        <end position="266"/>
    </location>
</feature>
<feature type="domain" description="SRCR 3" evidence="4">
    <location>
        <begin position="274"/>
        <end position="368"/>
    </location>
</feature>
<feature type="region of interest" description="Disordered" evidence="5">
    <location>
        <begin position="475"/>
        <end position="495"/>
    </location>
</feature>
<feature type="compositionally biased region" description="Polar residues" evidence="5">
    <location>
        <begin position="475"/>
        <end position="484"/>
    </location>
</feature>
<feature type="modified residue" description="Phosphoserine" evidence="2">
    <location>
        <position position="439"/>
    </location>
</feature>
<feature type="modified residue" description="Phosphotyrosine" evidence="2">
    <location>
        <position position="453"/>
    </location>
</feature>
<feature type="modified residue" description="Phosphoserine" evidence="2">
    <location>
        <position position="460"/>
    </location>
</feature>
<feature type="modified residue" description="Phosphoserine" evidence="2">
    <location>
        <position position="483"/>
    </location>
</feature>
<feature type="modified residue" description="Phosphoserine" evidence="2">
    <location>
        <position position="485"/>
    </location>
</feature>
<feature type="glycosylation site" description="N-linked (GlcNAc...) asparagine" evidence="3">
    <location>
        <position position="51"/>
    </location>
</feature>
<feature type="glycosylation site" description="N-linked (GlcNAc...) asparagine" evidence="3">
    <location>
        <position position="117"/>
    </location>
</feature>
<feature type="glycosylation site" description="N-linked (GlcNAc...) asparagine" evidence="3">
    <location>
        <position position="323"/>
    </location>
</feature>
<feature type="glycosylation site" description="N-linked (GlcNAc...) asparagine" evidence="3">
    <location>
        <position position="369"/>
    </location>
</feature>
<feature type="disulfide bond" evidence="4">
    <location>
        <begin position="43"/>
        <end position="85"/>
    </location>
</feature>
<feature type="disulfide bond" evidence="4">
    <location>
        <begin position="80"/>
        <end position="133"/>
    </location>
</feature>
<feature type="disulfide bond" evidence="4">
    <location>
        <begin position="108"/>
        <end position="118"/>
    </location>
</feature>
<feature type="disulfide bond" evidence="4">
    <location>
        <begin position="202"/>
        <end position="265"/>
    </location>
</feature>
<feature type="disulfide bond" evidence="4">
    <location>
        <begin position="242"/>
        <end position="248"/>
    </location>
</feature>
<feature type="disulfide bond" evidence="4">
    <location>
        <begin position="283"/>
        <end position="321"/>
    </location>
</feature>
<feature type="disulfide bond" evidence="4">
    <location>
        <begin position="301"/>
        <end position="360"/>
    </location>
</feature>
<feature type="disulfide bond" evidence="4">
    <location>
        <begin position="316"/>
        <end position="367"/>
    </location>
</feature>
<feature type="disulfide bond" evidence="4">
    <location>
        <begin position="342"/>
        <end position="350"/>
    </location>
</feature>
<feature type="sequence conflict" description="In Ref. 1; CAA37231." evidence="6" ref="1">
    <original>WE</original>
    <variation>RV</variation>
    <location>
        <begin position="312"/>
        <end position="313"/>
    </location>
</feature>
<feature type="sequence conflict" description="In Ref. 1; CAA37231." evidence="6" ref="1">
    <original>A</original>
    <variation>P</variation>
    <location>
        <position position="379"/>
    </location>
</feature>
<proteinExistence type="evidence at transcript level"/>
<evidence type="ECO:0000250" key="1"/>
<evidence type="ECO:0000250" key="2">
    <source>
        <dbReference type="UniProtKB" id="P06127"/>
    </source>
</evidence>
<evidence type="ECO:0000255" key="3"/>
<evidence type="ECO:0000255" key="4">
    <source>
        <dbReference type="PROSITE-ProRule" id="PRU00196"/>
    </source>
</evidence>
<evidence type="ECO:0000256" key="5">
    <source>
        <dbReference type="SAM" id="MobiDB-lite"/>
    </source>
</evidence>
<evidence type="ECO:0000305" key="6"/>
<keyword id="KW-1003">Cell membrane</keyword>
<keyword id="KW-1015">Disulfide bond</keyword>
<keyword id="KW-0325">Glycoprotein</keyword>
<keyword id="KW-0472">Membrane</keyword>
<keyword id="KW-0597">Phosphoprotein</keyword>
<keyword id="KW-0675">Receptor</keyword>
<keyword id="KW-1185">Reference proteome</keyword>
<keyword id="KW-0677">Repeat</keyword>
<keyword id="KW-0732">Signal</keyword>
<keyword id="KW-0812">Transmembrane</keyword>
<keyword id="KW-1133">Transmembrane helix</keyword>
<reference key="1">
    <citation type="journal article" date="1990" name="Nucleic Acids Res.">
        <title>Sequence of bovine CD5.</title>
        <authorList>
            <person name="Yu Q."/>
            <person name="Reichert M."/>
            <person name="Brousseau T."/>
            <person name="Cleuter Y."/>
            <person name="Burny A."/>
            <person name="Kettmann R."/>
        </authorList>
    </citation>
    <scope>NUCLEOTIDE SEQUENCE [MRNA]</scope>
    <source>
        <tissue>Thymus</tissue>
    </source>
</reference>
<reference key="2">
    <citation type="submission" date="2006-02" db="EMBL/GenBank/DDBJ databases">
        <authorList>
            <consortium name="NIH - Mammalian Gene Collection (MGC) project"/>
        </authorList>
    </citation>
    <scope>NUCLEOTIDE SEQUENCE [LARGE SCALE MRNA]</scope>
    <source>
        <strain>Hereford</strain>
        <tissue>Uterus</tissue>
    </source>
</reference>